<keyword id="KW-0997">Cell inner membrane</keyword>
<keyword id="KW-1003">Cell membrane</keyword>
<keyword id="KW-0472">Membrane</keyword>
<keyword id="KW-0812">Transmembrane</keyword>
<keyword id="KW-1133">Transmembrane helix</keyword>
<keyword id="KW-0813">Transport</keyword>
<protein>
    <recommendedName>
        <fullName evidence="1">Multidrug resistance protein MdtL</fullName>
    </recommendedName>
</protein>
<reference key="1">
    <citation type="journal article" date="2008" name="PLoS Genet.">
        <title>Complete genome sequence of the N2-fixing broad host range endophyte Klebsiella pneumoniae 342 and virulence predictions verified in mice.</title>
        <authorList>
            <person name="Fouts D.E."/>
            <person name="Tyler H.L."/>
            <person name="DeBoy R.T."/>
            <person name="Daugherty S."/>
            <person name="Ren Q."/>
            <person name="Badger J.H."/>
            <person name="Durkin A.S."/>
            <person name="Huot H."/>
            <person name="Shrivastava S."/>
            <person name="Kothari S."/>
            <person name="Dodson R.J."/>
            <person name="Mohamoud Y."/>
            <person name="Khouri H."/>
            <person name="Roesch L.F.W."/>
            <person name="Krogfelt K.A."/>
            <person name="Struve C."/>
            <person name="Triplett E.W."/>
            <person name="Methe B.A."/>
        </authorList>
    </citation>
    <scope>NUCLEOTIDE SEQUENCE [LARGE SCALE GENOMIC DNA]</scope>
    <source>
        <strain>342</strain>
    </source>
</reference>
<dbReference type="EMBL" id="CP000964">
    <property type="protein sequence ID" value="ACI08431.1"/>
    <property type="molecule type" value="Genomic_DNA"/>
</dbReference>
<dbReference type="SMR" id="B5XZP2"/>
<dbReference type="KEGG" id="kpe:KPK_5562"/>
<dbReference type="HOGENOM" id="CLU_001265_47_1_6"/>
<dbReference type="Proteomes" id="UP000001734">
    <property type="component" value="Chromosome"/>
</dbReference>
<dbReference type="GO" id="GO:0005886">
    <property type="term" value="C:plasma membrane"/>
    <property type="evidence" value="ECO:0007669"/>
    <property type="project" value="UniProtKB-SubCell"/>
</dbReference>
<dbReference type="GO" id="GO:0022857">
    <property type="term" value="F:transmembrane transporter activity"/>
    <property type="evidence" value="ECO:0007669"/>
    <property type="project" value="UniProtKB-UniRule"/>
</dbReference>
<dbReference type="CDD" id="cd17320">
    <property type="entry name" value="MFS_MdfA_MDR_like"/>
    <property type="match status" value="1"/>
</dbReference>
<dbReference type="FunFam" id="1.20.1720.10:FF:000003">
    <property type="entry name" value="Multidrug resistance protein MdtL"/>
    <property type="match status" value="1"/>
</dbReference>
<dbReference type="Gene3D" id="1.20.1720.10">
    <property type="entry name" value="Multidrug resistance protein D"/>
    <property type="match status" value="1"/>
</dbReference>
<dbReference type="HAMAP" id="MF_01530">
    <property type="entry name" value="MFS_MdtL"/>
    <property type="match status" value="1"/>
</dbReference>
<dbReference type="InterPro" id="IPR011701">
    <property type="entry name" value="MFS"/>
</dbReference>
<dbReference type="InterPro" id="IPR020846">
    <property type="entry name" value="MFS_dom"/>
</dbReference>
<dbReference type="InterPro" id="IPR050189">
    <property type="entry name" value="MFS_Efflux_Transporters"/>
</dbReference>
<dbReference type="InterPro" id="IPR036259">
    <property type="entry name" value="MFS_trans_sf"/>
</dbReference>
<dbReference type="InterPro" id="IPR023697">
    <property type="entry name" value="Multidrug-R_MdtL"/>
</dbReference>
<dbReference type="NCBIfam" id="NF007782">
    <property type="entry name" value="PRK10473.1"/>
    <property type="match status" value="1"/>
</dbReference>
<dbReference type="PANTHER" id="PTHR43124:SF3">
    <property type="entry name" value="CHLORAMPHENICOL EFFLUX PUMP RV0191"/>
    <property type="match status" value="1"/>
</dbReference>
<dbReference type="PANTHER" id="PTHR43124">
    <property type="entry name" value="PURINE EFFLUX PUMP PBUE"/>
    <property type="match status" value="1"/>
</dbReference>
<dbReference type="Pfam" id="PF07690">
    <property type="entry name" value="MFS_1"/>
    <property type="match status" value="1"/>
</dbReference>
<dbReference type="SUPFAM" id="SSF103473">
    <property type="entry name" value="MFS general substrate transporter"/>
    <property type="match status" value="1"/>
</dbReference>
<dbReference type="PROSITE" id="PS50850">
    <property type="entry name" value="MFS"/>
    <property type="match status" value="1"/>
</dbReference>
<name>MDTL_KLEP3</name>
<feature type="chain" id="PRO_1000200825" description="Multidrug resistance protein MdtL">
    <location>
        <begin position="1"/>
        <end position="392"/>
    </location>
</feature>
<feature type="transmembrane region" description="Helical" evidence="1">
    <location>
        <begin position="4"/>
        <end position="24"/>
    </location>
</feature>
<feature type="transmembrane region" description="Helical" evidence="1">
    <location>
        <begin position="38"/>
        <end position="58"/>
    </location>
</feature>
<feature type="transmembrane region" description="Helical" evidence="1">
    <location>
        <begin position="70"/>
        <end position="90"/>
    </location>
</feature>
<feature type="transmembrane region" description="Helical" evidence="1">
    <location>
        <begin position="95"/>
        <end position="115"/>
    </location>
</feature>
<feature type="transmembrane region" description="Helical" evidence="1">
    <location>
        <begin position="131"/>
        <end position="151"/>
    </location>
</feature>
<feature type="transmembrane region" description="Helical" evidence="1">
    <location>
        <begin position="158"/>
        <end position="178"/>
    </location>
</feature>
<feature type="transmembrane region" description="Helical" evidence="1">
    <location>
        <begin position="209"/>
        <end position="229"/>
    </location>
</feature>
<feature type="transmembrane region" description="Helical" evidence="1">
    <location>
        <begin position="246"/>
        <end position="266"/>
    </location>
</feature>
<feature type="transmembrane region" description="Helical" evidence="1">
    <location>
        <begin position="270"/>
        <end position="290"/>
    </location>
</feature>
<feature type="transmembrane region" description="Helical" evidence="1">
    <location>
        <begin position="294"/>
        <end position="314"/>
    </location>
</feature>
<feature type="transmembrane region" description="Helical" evidence="1">
    <location>
        <begin position="331"/>
        <end position="351"/>
    </location>
</feature>
<feature type="transmembrane region" description="Helical" evidence="1">
    <location>
        <begin position="357"/>
        <end position="377"/>
    </location>
</feature>
<sequence length="392" mass="41729">MTRFLLCSFALVLLYPSGIDMYLVGLPRIAQDLGASEAQLHIAFSVYLAGMASAMLFAGRIADRSGRKPVAIVGAVIFVVASLLCAQAHASSHFLVGRFIQGIGAGSCYVVAFAILRDTLDDRRRAKVLSLLNGITCIIPVLAPVLGHLIMLKYPWQSLFYTMTGMGVMVGLLSVFILRETRPTAHPQTATPQHGGSESLLNRFFLSRILITTLSVTAILTYVNVSPVLMMEEMGFDRGTYSMAMALMAMISMAVSFSTPFALSLFTPRTLMLTSQVLFLAAGLALSLATRQTLTLIGLGMICAGFSVGFGVAMSQALGPFTLRAGVASSVLGIAQVCGSSLWIWLAAIIGLSAMNMLIGILIACSIVSLVLLLVVTPPRVAQYDEEAAVES</sequence>
<organism>
    <name type="scientific">Klebsiella pneumoniae (strain 342)</name>
    <dbReference type="NCBI Taxonomy" id="507522"/>
    <lineage>
        <taxon>Bacteria</taxon>
        <taxon>Pseudomonadati</taxon>
        <taxon>Pseudomonadota</taxon>
        <taxon>Gammaproteobacteria</taxon>
        <taxon>Enterobacterales</taxon>
        <taxon>Enterobacteriaceae</taxon>
        <taxon>Klebsiella/Raoultella group</taxon>
        <taxon>Klebsiella</taxon>
        <taxon>Klebsiella pneumoniae complex</taxon>
    </lineage>
</organism>
<gene>
    <name evidence="1" type="primary">mdtL</name>
    <name type="ordered locus">KPK_5562</name>
</gene>
<proteinExistence type="inferred from homology"/>
<evidence type="ECO:0000255" key="1">
    <source>
        <dbReference type="HAMAP-Rule" id="MF_01530"/>
    </source>
</evidence>
<comment type="subcellular location">
    <subcellularLocation>
        <location evidence="1">Cell inner membrane</location>
        <topology evidence="1">Multi-pass membrane protein</topology>
    </subcellularLocation>
</comment>
<comment type="similarity">
    <text evidence="1">Belongs to the major facilitator superfamily. DHA1 family. MdtL (TC 2.A.1.2.22) subfamily.</text>
</comment>
<accession>B5XZP2</accession>